<organism>
    <name type="scientific">Homo sapiens</name>
    <name type="common">Human</name>
    <dbReference type="NCBI Taxonomy" id="9606"/>
    <lineage>
        <taxon>Eukaryota</taxon>
        <taxon>Metazoa</taxon>
        <taxon>Chordata</taxon>
        <taxon>Craniata</taxon>
        <taxon>Vertebrata</taxon>
        <taxon>Euteleostomi</taxon>
        <taxon>Mammalia</taxon>
        <taxon>Eutheria</taxon>
        <taxon>Euarchontoglires</taxon>
        <taxon>Primates</taxon>
        <taxon>Haplorrhini</taxon>
        <taxon>Catarrhini</taxon>
        <taxon>Hominidae</taxon>
        <taxon>Homo</taxon>
    </lineage>
</organism>
<comment type="interaction">
    <interactant intactId="EBI-12579907">
        <id>Q9UNK9</id>
    </interactant>
    <interactant intactId="EBI-529989">
        <id>Q9NRI5</id>
        <label>DISC1</label>
    </interactant>
    <organismsDiffer>false</organismsDiffer>
    <experiments>3</experiments>
</comment>
<comment type="similarity">
    <text evidence="2">Belongs to the CCR4/nocturin family.</text>
</comment>
<comment type="sequence caution" evidence="2">
    <conflict type="erroneous initiation">
        <sequence resource="EMBL-CDS" id="BAA34479"/>
    </conflict>
</comment>
<comment type="sequence caution" evidence="2">
    <conflict type="erroneous initiation">
        <sequence resource="EMBL-CDS" id="BAG63079"/>
    </conflict>
</comment>
<feature type="chain" id="PRO_0000218581" description="Protein angel homolog 1">
    <location>
        <begin position="1"/>
        <end position="670"/>
    </location>
</feature>
<feature type="modified residue" description="Phosphoserine" evidence="1">
    <location>
        <position position="77"/>
    </location>
</feature>
<feature type="modified residue" description="Phosphoserine" evidence="1">
    <location>
        <position position="105"/>
    </location>
</feature>
<feature type="sequence variant" id="VAR_056239" description="In dbSNP:rs34270005.">
    <original>G</original>
    <variation>W</variation>
    <location>
        <position position="141"/>
    </location>
</feature>
<feature type="sequence variant" id="VAR_061374" description="In dbSNP:rs45499197.">
    <original>V</original>
    <variation>L</variation>
    <location>
        <position position="383"/>
    </location>
</feature>
<feature type="sequence variant" id="VAR_056240" description="In dbSNP:rs2075773.">
    <original>F</original>
    <variation>C</variation>
    <location>
        <position position="515"/>
    </location>
</feature>
<feature type="sequence conflict" description="In Ref. 4; AAH28714." evidence="2" ref="4">
    <original>D</original>
    <variation>G</variation>
    <location>
        <position position="415"/>
    </location>
</feature>
<feature type="sequence conflict" description="In Ref. 5; BAG63079." evidence="2" ref="5">
    <original>P</original>
    <variation>T</variation>
    <location>
        <position position="441"/>
    </location>
</feature>
<dbReference type="EMBL" id="AB018302">
    <property type="protein sequence ID" value="BAA34479.1"/>
    <property type="status" value="ALT_INIT"/>
    <property type="molecule type" value="mRNA"/>
</dbReference>
<dbReference type="EMBL" id="AL137268">
    <property type="protein sequence ID" value="CAB70667.2"/>
    <property type="molecule type" value="mRNA"/>
</dbReference>
<dbReference type="EMBL" id="AF111169">
    <property type="protein sequence ID" value="AAD44362.1"/>
    <property type="molecule type" value="Genomic_DNA"/>
</dbReference>
<dbReference type="EMBL" id="BC028714">
    <property type="protein sequence ID" value="AAH28714.1"/>
    <property type="molecule type" value="mRNA"/>
</dbReference>
<dbReference type="EMBL" id="AK301589">
    <property type="protein sequence ID" value="BAG63079.1"/>
    <property type="status" value="ALT_INIT"/>
    <property type="molecule type" value="mRNA"/>
</dbReference>
<dbReference type="CCDS" id="CCDS9852.1"/>
<dbReference type="RefSeq" id="NP_056120.2">
    <property type="nucleotide sequence ID" value="NM_015305.4"/>
</dbReference>
<dbReference type="SMR" id="Q9UNK9"/>
<dbReference type="BioGRID" id="116938">
    <property type="interactions" value="70"/>
</dbReference>
<dbReference type="FunCoup" id="Q9UNK9">
    <property type="interactions" value="2570"/>
</dbReference>
<dbReference type="IntAct" id="Q9UNK9">
    <property type="interactions" value="32"/>
</dbReference>
<dbReference type="MINT" id="Q9UNK9"/>
<dbReference type="STRING" id="9606.ENSP00000251089"/>
<dbReference type="iPTMnet" id="Q9UNK9"/>
<dbReference type="PhosphoSitePlus" id="Q9UNK9"/>
<dbReference type="SwissPalm" id="Q9UNK9"/>
<dbReference type="BioMuta" id="ANGEL1"/>
<dbReference type="jPOST" id="Q9UNK9"/>
<dbReference type="MassIVE" id="Q9UNK9"/>
<dbReference type="PaxDb" id="9606-ENSP00000251089"/>
<dbReference type="PeptideAtlas" id="Q9UNK9"/>
<dbReference type="ProteomicsDB" id="85301"/>
<dbReference type="Pumba" id="Q9UNK9"/>
<dbReference type="Antibodypedia" id="58">
    <property type="antibodies" value="107 antibodies from 18 providers"/>
</dbReference>
<dbReference type="DNASU" id="23357"/>
<dbReference type="Ensembl" id="ENST00000251089.8">
    <property type="protein sequence ID" value="ENSP00000251089.3"/>
    <property type="gene ID" value="ENSG00000013523.12"/>
</dbReference>
<dbReference type="Ensembl" id="ENST00000554058.2">
    <property type="protein sequence ID" value="ENSP00000519383.1"/>
    <property type="gene ID" value="ENSG00000013523.12"/>
</dbReference>
<dbReference type="Ensembl" id="ENST00000556072.3">
    <property type="protein sequence ID" value="ENSP00000519384.1"/>
    <property type="gene ID" value="ENSG00000013523.12"/>
</dbReference>
<dbReference type="GeneID" id="23357"/>
<dbReference type="KEGG" id="hsa:23357"/>
<dbReference type="MANE-Select" id="ENST00000251089.8">
    <property type="protein sequence ID" value="ENSP00000251089.3"/>
    <property type="RefSeq nucleotide sequence ID" value="NM_015305.4"/>
    <property type="RefSeq protein sequence ID" value="NP_056120.2"/>
</dbReference>
<dbReference type="UCSC" id="uc001xsv.4">
    <property type="organism name" value="human"/>
</dbReference>
<dbReference type="AGR" id="HGNC:19961"/>
<dbReference type="CTD" id="23357"/>
<dbReference type="DisGeNET" id="23357"/>
<dbReference type="GeneCards" id="ANGEL1"/>
<dbReference type="HGNC" id="HGNC:19961">
    <property type="gene designation" value="ANGEL1"/>
</dbReference>
<dbReference type="HPA" id="ENSG00000013523">
    <property type="expression patterns" value="Low tissue specificity"/>
</dbReference>
<dbReference type="MIM" id="619537">
    <property type="type" value="gene"/>
</dbReference>
<dbReference type="neXtProt" id="NX_Q9UNK9"/>
<dbReference type="OpenTargets" id="ENSG00000013523"/>
<dbReference type="PharmGKB" id="PA134982299"/>
<dbReference type="VEuPathDB" id="HostDB:ENSG00000013523"/>
<dbReference type="eggNOG" id="KOG2338">
    <property type="taxonomic scope" value="Eukaryota"/>
</dbReference>
<dbReference type="GeneTree" id="ENSGT00940000159057"/>
<dbReference type="HOGENOM" id="CLU_016428_6_0_1"/>
<dbReference type="InParanoid" id="Q9UNK9"/>
<dbReference type="OMA" id="MIKSCKA"/>
<dbReference type="OrthoDB" id="10253982at2759"/>
<dbReference type="PAN-GO" id="Q9UNK9">
    <property type="GO annotations" value="1 GO annotation based on evolutionary models"/>
</dbReference>
<dbReference type="PhylomeDB" id="Q9UNK9"/>
<dbReference type="TreeFam" id="TF316126"/>
<dbReference type="PathwayCommons" id="Q9UNK9"/>
<dbReference type="SignaLink" id="Q9UNK9"/>
<dbReference type="BioGRID-ORCS" id="23357">
    <property type="hits" value="46 hits in 1158 CRISPR screens"/>
</dbReference>
<dbReference type="ChiTaRS" id="ANGEL1">
    <property type="organism name" value="human"/>
</dbReference>
<dbReference type="GenomeRNAi" id="23357"/>
<dbReference type="Pharos" id="Q9UNK9">
    <property type="development level" value="Tbio"/>
</dbReference>
<dbReference type="PRO" id="PR:Q9UNK9"/>
<dbReference type="Proteomes" id="UP000005640">
    <property type="component" value="Chromosome 14"/>
</dbReference>
<dbReference type="RNAct" id="Q9UNK9">
    <property type="molecule type" value="protein"/>
</dbReference>
<dbReference type="Bgee" id="ENSG00000013523">
    <property type="expression patterns" value="Expressed in right testis and 199 other cell types or tissues"/>
</dbReference>
<dbReference type="ExpressionAtlas" id="Q9UNK9">
    <property type="expression patterns" value="baseline and differential"/>
</dbReference>
<dbReference type="GO" id="GO:0005801">
    <property type="term" value="C:cis-Golgi network"/>
    <property type="evidence" value="ECO:0000314"/>
    <property type="project" value="AgBase"/>
</dbReference>
<dbReference type="GO" id="GO:0005829">
    <property type="term" value="C:cytosol"/>
    <property type="evidence" value="ECO:0000314"/>
    <property type="project" value="AgBase"/>
</dbReference>
<dbReference type="GO" id="GO:0005783">
    <property type="term" value="C:endoplasmic reticulum"/>
    <property type="evidence" value="ECO:0000314"/>
    <property type="project" value="AgBase"/>
</dbReference>
<dbReference type="GO" id="GO:0005741">
    <property type="term" value="C:mitochondrial outer membrane"/>
    <property type="evidence" value="ECO:0000314"/>
    <property type="project" value="FlyBase"/>
</dbReference>
<dbReference type="GO" id="GO:0005634">
    <property type="term" value="C:nucleus"/>
    <property type="evidence" value="ECO:0000314"/>
    <property type="project" value="AgBase"/>
</dbReference>
<dbReference type="GO" id="GO:0048471">
    <property type="term" value="C:perinuclear region of cytoplasm"/>
    <property type="evidence" value="ECO:0000314"/>
    <property type="project" value="AgBase"/>
</dbReference>
<dbReference type="GO" id="GO:0003824">
    <property type="term" value="F:catalytic activity"/>
    <property type="evidence" value="ECO:0007669"/>
    <property type="project" value="InterPro"/>
</dbReference>
<dbReference type="GO" id="GO:0008190">
    <property type="term" value="F:eukaryotic initiation factor 4E binding"/>
    <property type="evidence" value="ECO:0000314"/>
    <property type="project" value="AgBase"/>
</dbReference>
<dbReference type="GO" id="GO:0003730">
    <property type="term" value="F:mRNA 3'-UTR binding"/>
    <property type="evidence" value="ECO:0000318"/>
    <property type="project" value="GO_Central"/>
</dbReference>
<dbReference type="GO" id="GO:0019904">
    <property type="term" value="F:protein domain specific binding"/>
    <property type="evidence" value="ECO:0000314"/>
    <property type="project" value="AgBase"/>
</dbReference>
<dbReference type="FunFam" id="3.60.10.10:FF:000025">
    <property type="entry name" value="Angel homolog 1 (Drosophila)"/>
    <property type="match status" value="1"/>
</dbReference>
<dbReference type="Gene3D" id="3.60.10.10">
    <property type="entry name" value="Endonuclease/exonuclease/phosphatase"/>
    <property type="match status" value="1"/>
</dbReference>
<dbReference type="InterPro" id="IPR050410">
    <property type="entry name" value="CCR4/nocturin_mRNA_transcr"/>
</dbReference>
<dbReference type="InterPro" id="IPR036691">
    <property type="entry name" value="Endo/exonu/phosph_ase_sf"/>
</dbReference>
<dbReference type="InterPro" id="IPR005135">
    <property type="entry name" value="Endo/exonuclease/phosphatase"/>
</dbReference>
<dbReference type="PANTHER" id="PTHR12121">
    <property type="entry name" value="CARBON CATABOLITE REPRESSOR PROTEIN 4"/>
    <property type="match status" value="1"/>
</dbReference>
<dbReference type="PANTHER" id="PTHR12121:SF28">
    <property type="entry name" value="PROTEIN ANGEL HOMOLOG 1"/>
    <property type="match status" value="1"/>
</dbReference>
<dbReference type="Pfam" id="PF03372">
    <property type="entry name" value="Exo_endo_phos"/>
    <property type="match status" value="1"/>
</dbReference>
<dbReference type="SUPFAM" id="SSF56219">
    <property type="entry name" value="DNase I-like"/>
    <property type="match status" value="1"/>
</dbReference>
<proteinExistence type="evidence at protein level"/>
<keyword id="KW-0597">Phosphoprotein</keyword>
<keyword id="KW-1267">Proteomics identification</keyword>
<keyword id="KW-1185">Reference proteome</keyword>
<accession>Q9UNK9</accession>
<accession>B4DWL7</accession>
<accession>O94859</accession>
<accession>Q8NCS9</accession>
<evidence type="ECO:0000250" key="1">
    <source>
        <dbReference type="UniProtKB" id="B2RYM0"/>
    </source>
</evidence>
<evidence type="ECO:0000305" key="2"/>
<protein>
    <recommendedName>
        <fullName>Protein angel homolog 1</fullName>
    </recommendedName>
</protein>
<name>ANGE1_HUMAN</name>
<gene>
    <name type="primary">ANGEL1</name>
    <name type="synonym">KIAA0759</name>
</gene>
<sequence>MIASCLCYLLLPATRLFRALSDAFFTCRKNVLLANSSSPQVEGDFAMAPRGPEQEECEGLLQQWREEGLSQVLSTASEGPLIDKGLAQSSLALLMDNPGEENAASEDRWSSRQLSDLRAAENLDEPFPEMLGEEPLLEVEGVEGSMWAAIPMQSEPQYADCAALPVGALATEQWEEDPAVLAWSIAPEPVPQEEASIWPFEGLGQLQPPAVEIPYHEILWREWEDFSTQPDAQGLKAGDGPQFQFTLMSYNILAQDLMQQSSELYLHCHPDILNWNYRFVNLMQEFQHWDPDILCLQEVQEDHYWEQLEPSLRMMGFTCFYKRRTGCKTDGCAVCYKPTRFRLLCASPVEYFRPGLELLNRDNVGLVLLLQPLVPEGLGQVSVAPLCVANTHILYNPRRGDVKLAQMAILLAEVDKVARLSDGSHCPIILCGDLNSVPDSPLYNFIRDGELQYHGMPAWKVSGQEDFSHQLYQRKLQAPLWPSSLGITDCCQYVTSCHPKRSERRKYGRDFLLRFRFCSIACQRPVGLVLMEGVTDTKPERPAGWAESVLEEDASELEPAFSRTVGTIQHCLHLTSVYTHFLPQRGRPEVTTMPLGLGMTVDYIFFSAESCENGNRTDHRLYRDGTLKLLGRLSLLSEEILWAANGLPNPFCSSDHLCLLASFGMEVTAP</sequence>
<reference key="1">
    <citation type="journal article" date="1998" name="DNA Res.">
        <title>Prediction of the coding sequences of unidentified human genes. XI. The complete sequences of 100 new cDNA clones from brain which code for large proteins in vitro.</title>
        <authorList>
            <person name="Nagase T."/>
            <person name="Ishikawa K."/>
            <person name="Suyama M."/>
            <person name="Kikuno R."/>
            <person name="Miyajima N."/>
            <person name="Tanaka A."/>
            <person name="Kotani H."/>
            <person name="Nomura N."/>
            <person name="Ohara O."/>
        </authorList>
    </citation>
    <scope>NUCLEOTIDE SEQUENCE [LARGE SCALE MRNA]</scope>
    <source>
        <tissue>Brain</tissue>
    </source>
</reference>
<reference key="2">
    <citation type="journal article" date="2007" name="BMC Genomics">
        <title>The full-ORF clone resource of the German cDNA consortium.</title>
        <authorList>
            <person name="Bechtel S."/>
            <person name="Rosenfelder H."/>
            <person name="Duda A."/>
            <person name="Schmidt C.P."/>
            <person name="Ernst U."/>
            <person name="Wellenreuther R."/>
            <person name="Mehrle A."/>
            <person name="Schuster C."/>
            <person name="Bahr A."/>
            <person name="Bloecker H."/>
            <person name="Heubner D."/>
            <person name="Hoerlein A."/>
            <person name="Michel G."/>
            <person name="Wedler H."/>
            <person name="Koehrer K."/>
            <person name="Ottenwaelder B."/>
            <person name="Poustka A."/>
            <person name="Wiemann S."/>
            <person name="Schupp I."/>
        </authorList>
    </citation>
    <scope>NUCLEOTIDE SEQUENCE [LARGE SCALE MRNA]</scope>
    <source>
        <tissue>Testis</tissue>
    </source>
</reference>
<reference key="3">
    <citation type="journal article" date="2003" name="Nature">
        <title>The DNA sequence and analysis of human chromosome 14.</title>
        <authorList>
            <person name="Heilig R."/>
            <person name="Eckenberg R."/>
            <person name="Petit J.-L."/>
            <person name="Fonknechten N."/>
            <person name="Da Silva C."/>
            <person name="Cattolico L."/>
            <person name="Levy M."/>
            <person name="Barbe V."/>
            <person name="De Berardinis V."/>
            <person name="Ureta-Vidal A."/>
            <person name="Pelletier E."/>
            <person name="Vico V."/>
            <person name="Anthouard V."/>
            <person name="Rowen L."/>
            <person name="Madan A."/>
            <person name="Qin S."/>
            <person name="Sun H."/>
            <person name="Du H."/>
            <person name="Pepin K."/>
            <person name="Artiguenave F."/>
            <person name="Robert C."/>
            <person name="Cruaud C."/>
            <person name="Bruels T."/>
            <person name="Jaillon O."/>
            <person name="Friedlander L."/>
            <person name="Samson G."/>
            <person name="Brottier P."/>
            <person name="Cure S."/>
            <person name="Segurens B."/>
            <person name="Aniere F."/>
            <person name="Samain S."/>
            <person name="Crespeau H."/>
            <person name="Abbasi N."/>
            <person name="Aiach N."/>
            <person name="Boscus D."/>
            <person name="Dickhoff R."/>
            <person name="Dors M."/>
            <person name="Dubois I."/>
            <person name="Friedman C."/>
            <person name="Gouyvenoux M."/>
            <person name="James R."/>
            <person name="Madan A."/>
            <person name="Mairey-Estrada B."/>
            <person name="Mangenot S."/>
            <person name="Martins N."/>
            <person name="Menard M."/>
            <person name="Oztas S."/>
            <person name="Ratcliffe A."/>
            <person name="Shaffer T."/>
            <person name="Trask B."/>
            <person name="Vacherie B."/>
            <person name="Bellemere C."/>
            <person name="Belser C."/>
            <person name="Besnard-Gonnet M."/>
            <person name="Bartol-Mavel D."/>
            <person name="Boutard M."/>
            <person name="Briez-Silla S."/>
            <person name="Combette S."/>
            <person name="Dufosse-Laurent V."/>
            <person name="Ferron C."/>
            <person name="Lechaplais C."/>
            <person name="Louesse C."/>
            <person name="Muselet D."/>
            <person name="Magdelenat G."/>
            <person name="Pateau E."/>
            <person name="Petit E."/>
            <person name="Sirvain-Trukniewicz P."/>
            <person name="Trybou A."/>
            <person name="Vega-Czarny N."/>
            <person name="Bataille E."/>
            <person name="Bluet E."/>
            <person name="Bordelais I."/>
            <person name="Dubois M."/>
            <person name="Dumont C."/>
            <person name="Guerin T."/>
            <person name="Haffray S."/>
            <person name="Hammadi R."/>
            <person name="Muanga J."/>
            <person name="Pellouin V."/>
            <person name="Robert D."/>
            <person name="Wunderle E."/>
            <person name="Gauguet G."/>
            <person name="Roy A."/>
            <person name="Sainte-Marthe L."/>
            <person name="Verdier J."/>
            <person name="Verdier-Discala C."/>
            <person name="Hillier L.W."/>
            <person name="Fulton L."/>
            <person name="McPherson J."/>
            <person name="Matsuda F."/>
            <person name="Wilson R."/>
            <person name="Scarpelli C."/>
            <person name="Gyapay G."/>
            <person name="Wincker P."/>
            <person name="Saurin W."/>
            <person name="Quetier F."/>
            <person name="Waterston R."/>
            <person name="Hood L."/>
            <person name="Weissenbach J."/>
        </authorList>
    </citation>
    <scope>NUCLEOTIDE SEQUENCE [LARGE SCALE GENOMIC DNA]</scope>
</reference>
<reference key="4">
    <citation type="journal article" date="2004" name="Genome Res.">
        <title>The status, quality, and expansion of the NIH full-length cDNA project: the Mammalian Gene Collection (MGC).</title>
        <authorList>
            <consortium name="The MGC Project Team"/>
        </authorList>
    </citation>
    <scope>NUCLEOTIDE SEQUENCE [LARGE SCALE MRNA]</scope>
    <source>
        <tissue>Testis</tissue>
    </source>
</reference>
<reference key="5">
    <citation type="journal article" date="2004" name="Nat. Genet.">
        <title>Complete sequencing and characterization of 21,243 full-length human cDNAs.</title>
        <authorList>
            <person name="Ota T."/>
            <person name="Suzuki Y."/>
            <person name="Nishikawa T."/>
            <person name="Otsuki T."/>
            <person name="Sugiyama T."/>
            <person name="Irie R."/>
            <person name="Wakamatsu A."/>
            <person name="Hayashi K."/>
            <person name="Sato H."/>
            <person name="Nagai K."/>
            <person name="Kimura K."/>
            <person name="Makita H."/>
            <person name="Sekine M."/>
            <person name="Obayashi M."/>
            <person name="Nishi T."/>
            <person name="Shibahara T."/>
            <person name="Tanaka T."/>
            <person name="Ishii S."/>
            <person name="Yamamoto J."/>
            <person name="Saito K."/>
            <person name="Kawai Y."/>
            <person name="Isono Y."/>
            <person name="Nakamura Y."/>
            <person name="Nagahari K."/>
            <person name="Murakami K."/>
            <person name="Yasuda T."/>
            <person name="Iwayanagi T."/>
            <person name="Wagatsuma M."/>
            <person name="Shiratori A."/>
            <person name="Sudo H."/>
            <person name="Hosoiri T."/>
            <person name="Kaku Y."/>
            <person name="Kodaira H."/>
            <person name="Kondo H."/>
            <person name="Sugawara M."/>
            <person name="Takahashi M."/>
            <person name="Kanda K."/>
            <person name="Yokoi T."/>
            <person name="Furuya T."/>
            <person name="Kikkawa E."/>
            <person name="Omura Y."/>
            <person name="Abe K."/>
            <person name="Kamihara K."/>
            <person name="Katsuta N."/>
            <person name="Sato K."/>
            <person name="Tanikawa M."/>
            <person name="Yamazaki M."/>
            <person name="Ninomiya K."/>
            <person name="Ishibashi T."/>
            <person name="Yamashita H."/>
            <person name="Murakawa K."/>
            <person name="Fujimori K."/>
            <person name="Tanai H."/>
            <person name="Kimata M."/>
            <person name="Watanabe M."/>
            <person name="Hiraoka S."/>
            <person name="Chiba Y."/>
            <person name="Ishida S."/>
            <person name="Ono Y."/>
            <person name="Takiguchi S."/>
            <person name="Watanabe S."/>
            <person name="Yosida M."/>
            <person name="Hotuta T."/>
            <person name="Kusano J."/>
            <person name="Kanehori K."/>
            <person name="Takahashi-Fujii A."/>
            <person name="Hara H."/>
            <person name="Tanase T.-O."/>
            <person name="Nomura Y."/>
            <person name="Togiya S."/>
            <person name="Komai F."/>
            <person name="Hara R."/>
            <person name="Takeuchi K."/>
            <person name="Arita M."/>
            <person name="Imose N."/>
            <person name="Musashino K."/>
            <person name="Yuuki H."/>
            <person name="Oshima A."/>
            <person name="Sasaki N."/>
            <person name="Aotsuka S."/>
            <person name="Yoshikawa Y."/>
            <person name="Matsunawa H."/>
            <person name="Ichihara T."/>
            <person name="Shiohata N."/>
            <person name="Sano S."/>
            <person name="Moriya S."/>
            <person name="Momiyama H."/>
            <person name="Satoh N."/>
            <person name="Takami S."/>
            <person name="Terashima Y."/>
            <person name="Suzuki O."/>
            <person name="Nakagawa S."/>
            <person name="Senoh A."/>
            <person name="Mizoguchi H."/>
            <person name="Goto Y."/>
            <person name="Shimizu F."/>
            <person name="Wakebe H."/>
            <person name="Hishigaki H."/>
            <person name="Watanabe T."/>
            <person name="Sugiyama A."/>
            <person name="Takemoto M."/>
            <person name="Kawakami B."/>
            <person name="Yamazaki M."/>
            <person name="Watanabe K."/>
            <person name="Kumagai A."/>
            <person name="Itakura S."/>
            <person name="Fukuzumi Y."/>
            <person name="Fujimori Y."/>
            <person name="Komiyama M."/>
            <person name="Tashiro H."/>
            <person name="Tanigami A."/>
            <person name="Fujiwara T."/>
            <person name="Ono T."/>
            <person name="Yamada K."/>
            <person name="Fujii Y."/>
            <person name="Ozaki K."/>
            <person name="Hirao M."/>
            <person name="Ohmori Y."/>
            <person name="Kawabata A."/>
            <person name="Hikiji T."/>
            <person name="Kobatake N."/>
            <person name="Inagaki H."/>
            <person name="Ikema Y."/>
            <person name="Okamoto S."/>
            <person name="Okitani R."/>
            <person name="Kawakami T."/>
            <person name="Noguchi S."/>
            <person name="Itoh T."/>
            <person name="Shigeta K."/>
            <person name="Senba T."/>
            <person name="Matsumura K."/>
            <person name="Nakajima Y."/>
            <person name="Mizuno T."/>
            <person name="Morinaga M."/>
            <person name="Sasaki M."/>
            <person name="Togashi T."/>
            <person name="Oyama M."/>
            <person name="Hata H."/>
            <person name="Watanabe M."/>
            <person name="Komatsu T."/>
            <person name="Mizushima-Sugano J."/>
            <person name="Satoh T."/>
            <person name="Shirai Y."/>
            <person name="Takahashi Y."/>
            <person name="Nakagawa K."/>
            <person name="Okumura K."/>
            <person name="Nagase T."/>
            <person name="Nomura N."/>
            <person name="Kikuchi H."/>
            <person name="Masuho Y."/>
            <person name="Yamashita R."/>
            <person name="Nakai K."/>
            <person name="Yada T."/>
            <person name="Nakamura Y."/>
            <person name="Ohara O."/>
            <person name="Isogai T."/>
            <person name="Sugano S."/>
        </authorList>
    </citation>
    <scope>NUCLEOTIDE SEQUENCE [LARGE SCALE MRNA] OF 441-670</scope>
    <source>
        <tissue>Mammary tumor</tissue>
    </source>
</reference>
<reference key="6">
    <citation type="journal article" date="2013" name="J. Proteome Res.">
        <title>Toward a comprehensive characterization of a human cancer cell phosphoproteome.</title>
        <authorList>
            <person name="Zhou H."/>
            <person name="Di Palma S."/>
            <person name="Preisinger C."/>
            <person name="Peng M."/>
            <person name="Polat A.N."/>
            <person name="Heck A.J."/>
            <person name="Mohammed S."/>
        </authorList>
    </citation>
    <scope>IDENTIFICATION BY MASS SPECTROMETRY [LARGE SCALE ANALYSIS]</scope>
    <source>
        <tissue>Cervix carcinoma</tissue>
        <tissue>Erythroleukemia</tissue>
    </source>
</reference>